<reference key="1">
    <citation type="journal article" date="2006" name="Nat. Biotechnol.">
        <title>Genome sequence of the ubiquitous hydrocarbon-degrading marine bacterium Alcanivorax borkumensis.</title>
        <authorList>
            <person name="Schneiker S."/>
            <person name="Martins dos Santos V.A.P."/>
            <person name="Bartels D."/>
            <person name="Bekel T."/>
            <person name="Brecht M."/>
            <person name="Buhrmester J."/>
            <person name="Chernikova T.N."/>
            <person name="Denaro R."/>
            <person name="Ferrer M."/>
            <person name="Gertler C."/>
            <person name="Goesmann A."/>
            <person name="Golyshina O.V."/>
            <person name="Kaminski F."/>
            <person name="Khachane A.N."/>
            <person name="Lang S."/>
            <person name="Linke B."/>
            <person name="McHardy A.C."/>
            <person name="Meyer F."/>
            <person name="Nechitaylo T."/>
            <person name="Puehler A."/>
            <person name="Regenhardt D."/>
            <person name="Rupp O."/>
            <person name="Sabirova J.S."/>
            <person name="Selbitschka W."/>
            <person name="Yakimov M.M."/>
            <person name="Timmis K.N."/>
            <person name="Vorhoelter F.-J."/>
            <person name="Weidner S."/>
            <person name="Kaiser O."/>
            <person name="Golyshin P.N."/>
        </authorList>
    </citation>
    <scope>NUCLEOTIDE SEQUENCE [LARGE SCALE GENOMIC DNA]</scope>
    <source>
        <strain>ATCC 700651 / DSM 11573 / NCIMB 13689 / SK2</strain>
    </source>
</reference>
<feature type="chain" id="PRO_0000325567" description="Dihydroorotase">
    <location>
        <begin position="1"/>
        <end position="344"/>
    </location>
</feature>
<feature type="active site" evidence="1">
    <location>
        <position position="248"/>
    </location>
</feature>
<feature type="binding site" evidence="1">
    <location>
        <position position="14"/>
    </location>
    <ligand>
        <name>Zn(2+)</name>
        <dbReference type="ChEBI" id="CHEBI:29105"/>
        <label>1</label>
    </ligand>
</feature>
<feature type="binding site" evidence="1">
    <location>
        <begin position="16"/>
        <end position="18"/>
    </location>
    <ligand>
        <name>substrate</name>
    </ligand>
</feature>
<feature type="binding site" evidence="1">
    <location>
        <position position="16"/>
    </location>
    <ligand>
        <name>Zn(2+)</name>
        <dbReference type="ChEBI" id="CHEBI:29105"/>
        <label>1</label>
    </ligand>
</feature>
<feature type="binding site" evidence="1">
    <location>
        <position position="42"/>
    </location>
    <ligand>
        <name>substrate</name>
    </ligand>
</feature>
<feature type="binding site" description="via carbamate group" evidence="1">
    <location>
        <position position="100"/>
    </location>
    <ligand>
        <name>Zn(2+)</name>
        <dbReference type="ChEBI" id="CHEBI:29105"/>
        <label>1</label>
    </ligand>
</feature>
<feature type="binding site" description="via carbamate group" evidence="1">
    <location>
        <position position="100"/>
    </location>
    <ligand>
        <name>Zn(2+)</name>
        <dbReference type="ChEBI" id="CHEBI:29105"/>
        <label>2</label>
    </ligand>
</feature>
<feature type="binding site" evidence="1">
    <location>
        <position position="137"/>
    </location>
    <ligand>
        <name>substrate</name>
    </ligand>
</feature>
<feature type="binding site" evidence="1">
    <location>
        <position position="137"/>
    </location>
    <ligand>
        <name>Zn(2+)</name>
        <dbReference type="ChEBI" id="CHEBI:29105"/>
        <label>2</label>
    </ligand>
</feature>
<feature type="binding site" evidence="1">
    <location>
        <position position="175"/>
    </location>
    <ligand>
        <name>Zn(2+)</name>
        <dbReference type="ChEBI" id="CHEBI:29105"/>
        <label>2</label>
    </ligand>
</feature>
<feature type="binding site" evidence="1">
    <location>
        <position position="220"/>
    </location>
    <ligand>
        <name>substrate</name>
    </ligand>
</feature>
<feature type="binding site" evidence="1">
    <location>
        <position position="248"/>
    </location>
    <ligand>
        <name>Zn(2+)</name>
        <dbReference type="ChEBI" id="CHEBI:29105"/>
        <label>1</label>
    </ligand>
</feature>
<feature type="binding site" evidence="1">
    <location>
        <position position="252"/>
    </location>
    <ligand>
        <name>substrate</name>
    </ligand>
</feature>
<feature type="binding site" evidence="1">
    <location>
        <position position="264"/>
    </location>
    <ligand>
        <name>substrate</name>
    </ligand>
</feature>
<feature type="modified residue" description="N6-carboxylysine" evidence="1">
    <location>
        <position position="100"/>
    </location>
</feature>
<name>PYRC_ALCBS</name>
<protein>
    <recommendedName>
        <fullName evidence="1">Dihydroorotase</fullName>
        <shortName evidence="1">DHOase</shortName>
        <ecNumber evidence="1">3.5.2.3</ecNumber>
    </recommendedName>
</protein>
<dbReference type="EC" id="3.5.2.3" evidence="1"/>
<dbReference type="EMBL" id="AM286690">
    <property type="protein sequence ID" value="CAL17242.1"/>
    <property type="molecule type" value="Genomic_DNA"/>
</dbReference>
<dbReference type="RefSeq" id="WP_011589075.1">
    <property type="nucleotide sequence ID" value="NC_008260.1"/>
</dbReference>
<dbReference type="SMR" id="Q0VNK6"/>
<dbReference type="STRING" id="393595.ABO_1794"/>
<dbReference type="KEGG" id="abo:ABO_1794"/>
<dbReference type="eggNOG" id="COG0418">
    <property type="taxonomic scope" value="Bacteria"/>
</dbReference>
<dbReference type="HOGENOM" id="CLU_041558_1_0_6"/>
<dbReference type="OrthoDB" id="9808095at2"/>
<dbReference type="UniPathway" id="UPA00070">
    <property type="reaction ID" value="UER00117"/>
</dbReference>
<dbReference type="Proteomes" id="UP000008871">
    <property type="component" value="Chromosome"/>
</dbReference>
<dbReference type="GO" id="GO:0005829">
    <property type="term" value="C:cytosol"/>
    <property type="evidence" value="ECO:0007669"/>
    <property type="project" value="TreeGrafter"/>
</dbReference>
<dbReference type="GO" id="GO:0004151">
    <property type="term" value="F:dihydroorotase activity"/>
    <property type="evidence" value="ECO:0007669"/>
    <property type="project" value="UniProtKB-UniRule"/>
</dbReference>
<dbReference type="GO" id="GO:0008270">
    <property type="term" value="F:zinc ion binding"/>
    <property type="evidence" value="ECO:0007669"/>
    <property type="project" value="UniProtKB-UniRule"/>
</dbReference>
<dbReference type="GO" id="GO:0006207">
    <property type="term" value="P:'de novo' pyrimidine nucleobase biosynthetic process"/>
    <property type="evidence" value="ECO:0007669"/>
    <property type="project" value="TreeGrafter"/>
</dbReference>
<dbReference type="GO" id="GO:0044205">
    <property type="term" value="P:'de novo' UMP biosynthetic process"/>
    <property type="evidence" value="ECO:0007669"/>
    <property type="project" value="UniProtKB-UniRule"/>
</dbReference>
<dbReference type="CDD" id="cd01294">
    <property type="entry name" value="DHOase"/>
    <property type="match status" value="1"/>
</dbReference>
<dbReference type="FunFam" id="3.20.20.140:FF:000006">
    <property type="entry name" value="Dihydroorotase"/>
    <property type="match status" value="1"/>
</dbReference>
<dbReference type="Gene3D" id="3.20.20.140">
    <property type="entry name" value="Metal-dependent hydrolases"/>
    <property type="match status" value="1"/>
</dbReference>
<dbReference type="HAMAP" id="MF_00219">
    <property type="entry name" value="PyrC_classII"/>
    <property type="match status" value="1"/>
</dbReference>
<dbReference type="InterPro" id="IPR006680">
    <property type="entry name" value="Amidohydro-rel"/>
</dbReference>
<dbReference type="InterPro" id="IPR004721">
    <property type="entry name" value="DHOdimr"/>
</dbReference>
<dbReference type="InterPro" id="IPR002195">
    <property type="entry name" value="Dihydroorotase_CS"/>
</dbReference>
<dbReference type="InterPro" id="IPR032466">
    <property type="entry name" value="Metal_Hydrolase"/>
</dbReference>
<dbReference type="NCBIfam" id="TIGR00856">
    <property type="entry name" value="pyrC_dimer"/>
    <property type="match status" value="1"/>
</dbReference>
<dbReference type="PANTHER" id="PTHR43137">
    <property type="entry name" value="DIHYDROOROTASE"/>
    <property type="match status" value="1"/>
</dbReference>
<dbReference type="PANTHER" id="PTHR43137:SF1">
    <property type="entry name" value="DIHYDROOROTASE"/>
    <property type="match status" value="1"/>
</dbReference>
<dbReference type="Pfam" id="PF01979">
    <property type="entry name" value="Amidohydro_1"/>
    <property type="match status" value="1"/>
</dbReference>
<dbReference type="PIRSF" id="PIRSF001237">
    <property type="entry name" value="DHOdimr"/>
    <property type="match status" value="1"/>
</dbReference>
<dbReference type="SUPFAM" id="SSF51556">
    <property type="entry name" value="Metallo-dependent hydrolases"/>
    <property type="match status" value="1"/>
</dbReference>
<dbReference type="PROSITE" id="PS00482">
    <property type="entry name" value="DIHYDROOROTASE_1"/>
    <property type="match status" value="1"/>
</dbReference>
<dbReference type="PROSITE" id="PS00483">
    <property type="entry name" value="DIHYDROOROTASE_2"/>
    <property type="match status" value="1"/>
</dbReference>
<proteinExistence type="inferred from homology"/>
<accession>Q0VNK6</accession>
<gene>
    <name evidence="1" type="primary">pyrC</name>
    <name type="ordered locus">ABO_1794</name>
</gene>
<evidence type="ECO:0000255" key="1">
    <source>
        <dbReference type="HAMAP-Rule" id="MF_00219"/>
    </source>
</evidence>
<organism>
    <name type="scientific">Alcanivorax borkumensis (strain ATCC 700651 / DSM 11573 / NCIMB 13689 / SK2)</name>
    <dbReference type="NCBI Taxonomy" id="393595"/>
    <lineage>
        <taxon>Bacteria</taxon>
        <taxon>Pseudomonadati</taxon>
        <taxon>Pseudomonadota</taxon>
        <taxon>Gammaproteobacteria</taxon>
        <taxon>Oceanospirillales</taxon>
        <taxon>Alcanivoracaceae</taxon>
        <taxon>Alcanivorax</taxon>
    </lineage>
</organism>
<sequence length="344" mass="38001">MTDSLTIARPDDWHLHFRDGDLLAETVPATANVFGRAIVMPNLTPPVNTVAEAAEYRERILAQVPAGVNFEPLMVLYLTDSTPVQEVERAANSDFVHALKLYPAGATTNSDSGVTDPGKITHLYEAMEKHDVPLLVHGEVTDAEVDIFDRERVFIDRYLADIRDQFPALRIVFEHVTTAEGVNFVREANALTAATVTPQHLLMNRNDLLVGGVRPHNYCLPILKRRQHQEAIQKAVIEGNSRFFLGTDSAPHARTKKEAACGCAGCYSARAALPLYATFLEQHNALDKLEGFASHFGADFYRLPRHTDTVTLVRKPWAVPTVIDAAGEPVVPFFAGEQLPWSLG</sequence>
<keyword id="KW-0378">Hydrolase</keyword>
<keyword id="KW-0479">Metal-binding</keyword>
<keyword id="KW-0665">Pyrimidine biosynthesis</keyword>
<keyword id="KW-1185">Reference proteome</keyword>
<keyword id="KW-0862">Zinc</keyword>
<comment type="function">
    <text evidence="1">Catalyzes the reversible cyclization of carbamoyl aspartate to dihydroorotate.</text>
</comment>
<comment type="catalytic activity">
    <reaction evidence="1">
        <text>(S)-dihydroorotate + H2O = N-carbamoyl-L-aspartate + H(+)</text>
        <dbReference type="Rhea" id="RHEA:24296"/>
        <dbReference type="ChEBI" id="CHEBI:15377"/>
        <dbReference type="ChEBI" id="CHEBI:15378"/>
        <dbReference type="ChEBI" id="CHEBI:30864"/>
        <dbReference type="ChEBI" id="CHEBI:32814"/>
        <dbReference type="EC" id="3.5.2.3"/>
    </reaction>
</comment>
<comment type="cofactor">
    <cofactor evidence="1">
        <name>Zn(2+)</name>
        <dbReference type="ChEBI" id="CHEBI:29105"/>
    </cofactor>
    <text evidence="1">Binds 2 Zn(2+) ions per subunit.</text>
</comment>
<comment type="pathway">
    <text evidence="1">Pyrimidine metabolism; UMP biosynthesis via de novo pathway; (S)-dihydroorotate from bicarbonate: step 3/3.</text>
</comment>
<comment type="subunit">
    <text evidence="1">Homodimer.</text>
</comment>
<comment type="similarity">
    <text evidence="1">Belongs to the metallo-dependent hydrolases superfamily. DHOase family. Class II DHOase subfamily.</text>
</comment>